<gene>
    <name evidence="6" type="primary">ztf-2</name>
    <name evidence="6" type="ORF">F13G3.1</name>
</gene>
<protein>
    <recommendedName>
        <fullName evidence="4">Zinc finger protein ztf-2</fullName>
    </recommendedName>
</protein>
<evidence type="ECO:0000255" key="1">
    <source>
        <dbReference type="PROSITE-ProRule" id="PRU00042"/>
    </source>
</evidence>
<evidence type="ECO:0000256" key="2">
    <source>
        <dbReference type="SAM" id="MobiDB-lite"/>
    </source>
</evidence>
<evidence type="ECO:0000269" key="3">
    <source>
    </source>
</evidence>
<evidence type="ECO:0000305" key="4"/>
<evidence type="ECO:0000312" key="5">
    <source>
        <dbReference type="Proteomes" id="UP000001940"/>
    </source>
</evidence>
<evidence type="ECO:0000312" key="6">
    <source>
        <dbReference type="WormBase" id="F13G3.1"/>
    </source>
</evidence>
<reference evidence="5" key="1">
    <citation type="journal article" date="1998" name="Science">
        <title>Genome sequence of the nematode C. elegans: a platform for investigating biology.</title>
        <authorList>
            <consortium name="The C. elegans sequencing consortium"/>
        </authorList>
    </citation>
    <scope>NUCLEOTIDE SEQUENCE [LARGE SCALE GENOMIC DNA]</scope>
    <source>
        <strain evidence="5">Bristol N2</strain>
    </source>
</reference>
<reference evidence="4" key="2">
    <citation type="journal article" date="2006" name="Cell">
        <title>A gene-centered C. elegans protein-DNA interaction network.</title>
        <authorList>
            <person name="Deplancke B."/>
            <person name="Mukhopadhyay A."/>
            <person name="Ao W."/>
            <person name="Elewa A.M."/>
            <person name="Grove C.A."/>
            <person name="Martinez N.J."/>
            <person name="Sequerra R."/>
            <person name="Doucette-Stamm L."/>
            <person name="Reece-Hoyes J.S."/>
            <person name="Hope I.A."/>
            <person name="Tissenbaum H.A."/>
            <person name="Mango S.E."/>
            <person name="Walhout A.J."/>
        </authorList>
    </citation>
    <scope>FUNCTION</scope>
    <scope>TISSUE SPECIFICITY</scope>
    <scope>DISRUPTION PHENOTYPE</scope>
</reference>
<feature type="chain" id="PRO_0000455603" description="Zinc finger protein ztf-2">
    <location>
        <begin position="1"/>
        <end position="360"/>
    </location>
</feature>
<feature type="zinc finger region" description="C2H2-type 1" evidence="1">
    <location>
        <begin position="87"/>
        <end position="109"/>
    </location>
</feature>
<feature type="zinc finger region" description="C2H2-type 2" evidence="1">
    <location>
        <begin position="115"/>
        <end position="138"/>
    </location>
</feature>
<feature type="zinc finger region" description="C2H2-type 3" evidence="1">
    <location>
        <begin position="180"/>
        <end position="203"/>
    </location>
</feature>
<feature type="region of interest" description="Disordered" evidence="2">
    <location>
        <begin position="19"/>
        <end position="41"/>
    </location>
</feature>
<feature type="region of interest" description="Disordered" evidence="2">
    <location>
        <begin position="248"/>
        <end position="272"/>
    </location>
</feature>
<feature type="compositionally biased region" description="Low complexity" evidence="2">
    <location>
        <begin position="248"/>
        <end position="260"/>
    </location>
</feature>
<keyword id="KW-0479">Metal-binding</keyword>
<keyword id="KW-1185">Reference proteome</keyword>
<keyword id="KW-0677">Repeat</keyword>
<keyword id="KW-0804">Transcription</keyword>
<keyword id="KW-0805">Transcription regulation</keyword>
<keyword id="KW-0862">Zinc</keyword>
<keyword id="KW-0863">Zinc-finger</keyword>
<sequence>MNCESLLTALDVSTLLSTLSSPEKEHRRKRRRGEVANPSNTLDALVARKADDQPFEKRYLSEQEAIEGPDDEIEMKKMELDPDVSTRTCSTCGYQGKWVSEMIRHKRVHTSERPFKCRYCSRTSKWKADLIRHVAKTHGIRVVSKYSRSKVFDATNSSMDSSCSSDSDRCIISEKRTVFYRCQLCSFEDERVSVLNSHVSHLHNTSPCVCRCGAKFEDVQGALAHSNGPCSHVDMIYNVMPTYEKASPLSPCRSESSSDSGIQTDPEEEASIITSSLPTPQLGSSPLLLSPTLPVTPSFLPDIQSALLSLQPNPLMSLYLASLLQSSLLNSPTIPTSFPQIIPTTILTPSQQDEMVDVEM</sequence>
<proteinExistence type="evidence at protein level"/>
<accession>Q19418</accession>
<organism evidence="5">
    <name type="scientific">Caenorhabditis elegans</name>
    <dbReference type="NCBI Taxonomy" id="6239"/>
    <lineage>
        <taxon>Eukaryota</taxon>
        <taxon>Metazoa</taxon>
        <taxon>Ecdysozoa</taxon>
        <taxon>Nematoda</taxon>
        <taxon>Chromadorea</taxon>
        <taxon>Rhabditida</taxon>
        <taxon>Rhabditina</taxon>
        <taxon>Rhabditomorpha</taxon>
        <taxon>Rhabditoidea</taxon>
        <taxon>Rhabditidae</taxon>
        <taxon>Peloderinae</taxon>
        <taxon>Caenorhabditis</taxon>
    </lineage>
</organism>
<comment type="function">
    <text evidence="3">Transcription factor (PubMed:16777607). Represses gene expression, probably via binding to DNA consensus sequence 5'-[AT][CT]TTCC[AC][AG]-3' in promoter regions (PubMed:16777607). May play a role in pharynx morphogenesis (PubMed:16777607).</text>
</comment>
<comment type="interaction">
    <interactant intactId="EBI-2315670">
        <id>Q19418</id>
    </interactant>
    <interactant intactId="EBI-2317194">
        <id>Q95XW5</id>
        <label>magu-1</label>
    </interactant>
    <organismsDiffer>false</organismsDiffer>
    <experiments>3</experiments>
</comment>
<comment type="interaction">
    <interactant intactId="EBI-2315670">
        <id>Q19418</id>
    </interactant>
    <interactant intactId="EBI-2315635">
        <id>Q8MPT2</id>
        <label>T04C9.1</label>
    </interactant>
    <organismsDiffer>false</organismsDiffer>
    <experiments>3</experiments>
</comment>
<comment type="tissue specificity">
    <text evidence="3">Expressed in pharyngeal epithelium/arcade, which connects the pharynx to the mouth.</text>
</comment>
<comment type="disruption phenotype">
    <text evidence="3">RNAi-mediated knockdown causes an increase in fat-5 gene expression in the pharynx (PubMed:16777607). Pharynx unattached (Pun) phenotype (PubMed:16777607).</text>
</comment>
<dbReference type="EMBL" id="BX284601">
    <property type="protein sequence ID" value="CAA95789.1"/>
    <property type="molecule type" value="Genomic_DNA"/>
</dbReference>
<dbReference type="PIR" id="T20853">
    <property type="entry name" value="T20853"/>
</dbReference>
<dbReference type="RefSeq" id="NP_001379129.1">
    <property type="nucleotide sequence ID" value="NM_001392538.1"/>
</dbReference>
<dbReference type="RefSeq" id="NP_492060.1">
    <property type="nucleotide sequence ID" value="NM_059659.3"/>
</dbReference>
<dbReference type="FunCoup" id="Q19418">
    <property type="interactions" value="13"/>
</dbReference>
<dbReference type="IntAct" id="Q19418">
    <property type="interactions" value="221"/>
</dbReference>
<dbReference type="STRING" id="6239.F13G3.1.1"/>
<dbReference type="PaxDb" id="6239-F13G3.1"/>
<dbReference type="EnsemblMetazoa" id="F13G3.1.1">
    <property type="protein sequence ID" value="F13G3.1.1"/>
    <property type="gene ID" value="WBGene00008762"/>
</dbReference>
<dbReference type="GeneID" id="184429"/>
<dbReference type="UCSC" id="F13G3.1">
    <property type="organism name" value="c. elegans"/>
</dbReference>
<dbReference type="AGR" id="WB:WBGene00008762"/>
<dbReference type="WormBase" id="F13G3.1">
    <property type="protein sequence ID" value="CE05613"/>
    <property type="gene ID" value="WBGene00008762"/>
    <property type="gene designation" value="ztf-2"/>
</dbReference>
<dbReference type="eggNOG" id="KOG1721">
    <property type="taxonomic scope" value="Eukaryota"/>
</dbReference>
<dbReference type="HOGENOM" id="CLU_769943_0_0_1"/>
<dbReference type="InParanoid" id="Q19418"/>
<dbReference type="OMA" id="HNTSPCV"/>
<dbReference type="OrthoDB" id="6077919at2759"/>
<dbReference type="PhylomeDB" id="Q19418"/>
<dbReference type="Reactome" id="R-CEL-9843940">
    <property type="pathway name" value="Regulation of endogenous retroelements by KRAB-ZFP proteins"/>
</dbReference>
<dbReference type="PRO" id="PR:Q19418"/>
<dbReference type="Proteomes" id="UP000001940">
    <property type="component" value="Chromosome I"/>
</dbReference>
<dbReference type="Bgee" id="WBGene00008762">
    <property type="expression patterns" value="Expressed in larva and 2 other cell types or tissues"/>
</dbReference>
<dbReference type="GO" id="GO:0003700">
    <property type="term" value="F:DNA-binding transcription factor activity"/>
    <property type="evidence" value="ECO:0000315"/>
    <property type="project" value="UniProtKB"/>
</dbReference>
<dbReference type="GO" id="GO:0000978">
    <property type="term" value="F:RNA polymerase II cis-regulatory region sequence-specific DNA binding"/>
    <property type="evidence" value="ECO:0000315"/>
    <property type="project" value="UniProtKB"/>
</dbReference>
<dbReference type="GO" id="GO:0008270">
    <property type="term" value="F:zinc ion binding"/>
    <property type="evidence" value="ECO:0007669"/>
    <property type="project" value="UniProtKB-KW"/>
</dbReference>
<dbReference type="GO" id="GO:0000122">
    <property type="term" value="P:negative regulation of transcription by RNA polymerase II"/>
    <property type="evidence" value="ECO:0000315"/>
    <property type="project" value="UniProtKB"/>
</dbReference>
<dbReference type="GO" id="GO:0110040">
    <property type="term" value="P:nematode pharynx morphogenesis"/>
    <property type="evidence" value="ECO:0000315"/>
    <property type="project" value="UniProtKB"/>
</dbReference>
<dbReference type="Gene3D" id="3.30.160.60">
    <property type="entry name" value="Classic Zinc Finger"/>
    <property type="match status" value="2"/>
</dbReference>
<dbReference type="InterPro" id="IPR036236">
    <property type="entry name" value="Znf_C2H2_sf"/>
</dbReference>
<dbReference type="InterPro" id="IPR013087">
    <property type="entry name" value="Znf_C2H2_type"/>
</dbReference>
<dbReference type="PANTHER" id="PTHR24409:SF295">
    <property type="entry name" value="AZ2-RELATED"/>
    <property type="match status" value="1"/>
</dbReference>
<dbReference type="PANTHER" id="PTHR24409">
    <property type="entry name" value="ZINC FINGER PROTEIN 142"/>
    <property type="match status" value="1"/>
</dbReference>
<dbReference type="SMART" id="SM00355">
    <property type="entry name" value="ZnF_C2H2"/>
    <property type="match status" value="3"/>
</dbReference>
<dbReference type="SUPFAM" id="SSF57667">
    <property type="entry name" value="beta-beta-alpha zinc fingers"/>
    <property type="match status" value="1"/>
</dbReference>
<dbReference type="PROSITE" id="PS50157">
    <property type="entry name" value="ZINC_FINGER_C2H2_2"/>
    <property type="match status" value="1"/>
</dbReference>
<name>ZTF2_CAEEL</name>